<name>PSBI_NASOF</name>
<reference key="1">
    <citation type="submission" date="2007-03" db="EMBL/GenBank/DDBJ databases">
        <title>Sequencing analysis of Nasturtium officinale chloroplast DNA.</title>
        <authorList>
            <person name="Hosouchi T."/>
            <person name="Tsuruoka H."/>
            <person name="Kotani H."/>
        </authorList>
    </citation>
    <scope>NUCLEOTIDE SEQUENCE [LARGE SCALE GENOMIC DNA]</scope>
</reference>
<organism>
    <name type="scientific">Nasturtium officinale</name>
    <name type="common">Watercress</name>
    <name type="synonym">Rorippa nasturtium-aquaticum</name>
    <dbReference type="NCBI Taxonomy" id="65948"/>
    <lineage>
        <taxon>Eukaryota</taxon>
        <taxon>Viridiplantae</taxon>
        <taxon>Streptophyta</taxon>
        <taxon>Embryophyta</taxon>
        <taxon>Tracheophyta</taxon>
        <taxon>Spermatophyta</taxon>
        <taxon>Magnoliopsida</taxon>
        <taxon>eudicotyledons</taxon>
        <taxon>Gunneridae</taxon>
        <taxon>Pentapetalae</taxon>
        <taxon>rosids</taxon>
        <taxon>malvids</taxon>
        <taxon>Brassicales</taxon>
        <taxon>Brassicaceae</taxon>
        <taxon>Cardamineae</taxon>
        <taxon>Nasturtium</taxon>
    </lineage>
</organism>
<keyword id="KW-0150">Chloroplast</keyword>
<keyword id="KW-0472">Membrane</keyword>
<keyword id="KW-0602">Photosynthesis</keyword>
<keyword id="KW-0604">Photosystem II</keyword>
<keyword id="KW-0934">Plastid</keyword>
<keyword id="KW-0674">Reaction center</keyword>
<keyword id="KW-0793">Thylakoid</keyword>
<keyword id="KW-0812">Transmembrane</keyword>
<keyword id="KW-1133">Transmembrane helix</keyword>
<dbReference type="EMBL" id="AP009376">
    <property type="protein sequence ID" value="BAF50622.1"/>
    <property type="molecule type" value="Genomic_DNA"/>
</dbReference>
<dbReference type="RefSeq" id="YP_001123798.1">
    <property type="nucleotide sequence ID" value="NC_009275.1"/>
</dbReference>
<dbReference type="SMR" id="A4QLR7"/>
<dbReference type="GeneID" id="4962150"/>
<dbReference type="GO" id="GO:0009535">
    <property type="term" value="C:chloroplast thylakoid membrane"/>
    <property type="evidence" value="ECO:0007669"/>
    <property type="project" value="UniProtKB-SubCell"/>
</dbReference>
<dbReference type="GO" id="GO:0009539">
    <property type="term" value="C:photosystem II reaction center"/>
    <property type="evidence" value="ECO:0007669"/>
    <property type="project" value="InterPro"/>
</dbReference>
<dbReference type="GO" id="GO:0015979">
    <property type="term" value="P:photosynthesis"/>
    <property type="evidence" value="ECO:0007669"/>
    <property type="project" value="UniProtKB-UniRule"/>
</dbReference>
<dbReference type="HAMAP" id="MF_01316">
    <property type="entry name" value="PSII_PsbI"/>
    <property type="match status" value="1"/>
</dbReference>
<dbReference type="InterPro" id="IPR003686">
    <property type="entry name" value="PSII_PsbI"/>
</dbReference>
<dbReference type="InterPro" id="IPR037271">
    <property type="entry name" value="PSII_PsbI_sf"/>
</dbReference>
<dbReference type="NCBIfam" id="NF002735">
    <property type="entry name" value="PRK02655.1"/>
    <property type="match status" value="1"/>
</dbReference>
<dbReference type="PANTHER" id="PTHR35772">
    <property type="entry name" value="PHOTOSYSTEM II REACTION CENTER PROTEIN I"/>
    <property type="match status" value="1"/>
</dbReference>
<dbReference type="PANTHER" id="PTHR35772:SF1">
    <property type="entry name" value="PHOTOSYSTEM II REACTION CENTER PROTEIN I"/>
    <property type="match status" value="1"/>
</dbReference>
<dbReference type="Pfam" id="PF02532">
    <property type="entry name" value="PsbI"/>
    <property type="match status" value="1"/>
</dbReference>
<dbReference type="SUPFAM" id="SSF161041">
    <property type="entry name" value="Photosystem II reaction center protein I, PsbI"/>
    <property type="match status" value="1"/>
</dbReference>
<gene>
    <name evidence="1" type="primary">psbI</name>
</gene>
<evidence type="ECO:0000255" key="1">
    <source>
        <dbReference type="HAMAP-Rule" id="MF_01316"/>
    </source>
</evidence>
<geneLocation type="chloroplast"/>
<protein>
    <recommendedName>
        <fullName evidence="1">Photosystem II reaction center protein I</fullName>
        <shortName evidence="1">PSII-I</shortName>
    </recommendedName>
    <alternativeName>
        <fullName evidence="1">PSII 4.8 kDa protein</fullName>
    </alternativeName>
</protein>
<feature type="chain" id="PRO_0000298323" description="Photosystem II reaction center protein I">
    <location>
        <begin position="1"/>
        <end position="36"/>
    </location>
</feature>
<feature type="transmembrane region" description="Helical" evidence="1">
    <location>
        <begin position="4"/>
        <end position="24"/>
    </location>
</feature>
<sequence length="36" mass="4168">MLTLKLFVYTVVIFFVSLFIFGFLSNDPGRNPGREE</sequence>
<comment type="function">
    <text evidence="1">One of the components of the core complex of photosystem II (PSII), required for its stability and/or assembly. PSII is a light-driven water:plastoquinone oxidoreductase that uses light energy to abstract electrons from H(2)O, generating O(2) and a proton gradient subsequently used for ATP formation. It consists of a core antenna complex that captures photons, and an electron transfer chain that converts photonic excitation into a charge separation.</text>
</comment>
<comment type="subunit">
    <text evidence="1">PSII is composed of 1 copy each of membrane proteins PsbA, PsbB, PsbC, PsbD, PsbE, PsbF, PsbH, PsbI, PsbJ, PsbK, PsbL, PsbM, PsbT, PsbX, PsbY, PsbZ, Psb30/Ycf12, at least 3 peripheral proteins of the oxygen-evolving complex and a large number of cofactors. It forms dimeric complexes.</text>
</comment>
<comment type="subcellular location">
    <subcellularLocation>
        <location evidence="1">Plastid</location>
        <location evidence="1">Chloroplast thylakoid membrane</location>
        <topology evidence="1">Single-pass membrane protein</topology>
    </subcellularLocation>
</comment>
<comment type="similarity">
    <text evidence="1">Belongs to the PsbI family.</text>
</comment>
<accession>A4QLR7</accession>
<proteinExistence type="inferred from homology"/>